<proteinExistence type="inferred from homology"/>
<organism>
    <name type="scientific">Thermosynechococcus vestitus (strain NIES-2133 / IAM M-273 / BP-1)</name>
    <dbReference type="NCBI Taxonomy" id="197221"/>
    <lineage>
        <taxon>Bacteria</taxon>
        <taxon>Bacillati</taxon>
        <taxon>Cyanobacteriota</taxon>
        <taxon>Cyanophyceae</taxon>
        <taxon>Acaryochloridales</taxon>
        <taxon>Thermosynechococcaceae</taxon>
        <taxon>Thermosynechococcus</taxon>
    </lineage>
</organism>
<name>RS10_THEVB</name>
<protein>
    <recommendedName>
        <fullName evidence="1">Small ribosomal subunit protein uS10</fullName>
    </recommendedName>
    <alternativeName>
        <fullName evidence="2">30S ribosomal protein S10</fullName>
    </alternativeName>
</protein>
<sequence length="104" mass="11882">MAALQQKIRIRLKAFDHRLLDTSCDRIVDTAKRTGASPVGPIPLPTRRRIYCVLRSPHVDKDSREHFETRTHCRILDIYQPSPKTIDALIKLDLPAGVDIEVKL</sequence>
<keyword id="KW-1185">Reference proteome</keyword>
<keyword id="KW-0687">Ribonucleoprotein</keyword>
<keyword id="KW-0689">Ribosomal protein</keyword>
<comment type="function">
    <text evidence="1">Involved in the binding of tRNA to the ribosomes.</text>
</comment>
<comment type="subunit">
    <text evidence="1">Part of the 30S ribosomal subunit.</text>
</comment>
<comment type="similarity">
    <text evidence="1">Belongs to the universal ribosomal protein uS10 family.</text>
</comment>
<evidence type="ECO:0000255" key="1">
    <source>
        <dbReference type="HAMAP-Rule" id="MF_00508"/>
    </source>
</evidence>
<evidence type="ECO:0000305" key="2"/>
<gene>
    <name evidence="1" type="primary">rpsJ</name>
    <name evidence="1" type="synonym">rps10</name>
    <name type="ordered locus">tlr1751</name>
</gene>
<reference key="1">
    <citation type="journal article" date="2002" name="DNA Res.">
        <title>Complete genome structure of the thermophilic cyanobacterium Thermosynechococcus elongatus BP-1.</title>
        <authorList>
            <person name="Nakamura Y."/>
            <person name="Kaneko T."/>
            <person name="Sato S."/>
            <person name="Ikeuchi M."/>
            <person name="Katoh H."/>
            <person name="Sasamoto S."/>
            <person name="Watanabe A."/>
            <person name="Iriguchi M."/>
            <person name="Kawashima K."/>
            <person name="Kimura T."/>
            <person name="Kishida Y."/>
            <person name="Kiyokawa C."/>
            <person name="Kohara M."/>
            <person name="Matsumoto M."/>
            <person name="Matsuno A."/>
            <person name="Nakazaki N."/>
            <person name="Shimpo S."/>
            <person name="Sugimoto M."/>
            <person name="Takeuchi C."/>
            <person name="Yamada M."/>
            <person name="Tabata S."/>
        </authorList>
    </citation>
    <scope>NUCLEOTIDE SEQUENCE [LARGE SCALE GENOMIC DNA]</scope>
    <source>
        <strain>NIES-2133 / IAM M-273 / BP-1</strain>
    </source>
</reference>
<dbReference type="EMBL" id="BA000039">
    <property type="protein sequence ID" value="BAC09303.1"/>
    <property type="molecule type" value="Genomic_DNA"/>
</dbReference>
<dbReference type="RefSeq" id="NP_682541.1">
    <property type="nucleotide sequence ID" value="NC_004113.1"/>
</dbReference>
<dbReference type="RefSeq" id="WP_011057588.1">
    <property type="nucleotide sequence ID" value="NC_004113.1"/>
</dbReference>
<dbReference type="SMR" id="Q8DI41"/>
<dbReference type="STRING" id="197221.gene:10748355"/>
<dbReference type="EnsemblBacteria" id="BAC09303">
    <property type="protein sequence ID" value="BAC09303"/>
    <property type="gene ID" value="BAC09303"/>
</dbReference>
<dbReference type="KEGG" id="tel:tlr1751"/>
<dbReference type="PATRIC" id="fig|197221.4.peg.1832"/>
<dbReference type="eggNOG" id="COG0051">
    <property type="taxonomic scope" value="Bacteria"/>
</dbReference>
<dbReference type="Proteomes" id="UP000000440">
    <property type="component" value="Chromosome"/>
</dbReference>
<dbReference type="GO" id="GO:1990904">
    <property type="term" value="C:ribonucleoprotein complex"/>
    <property type="evidence" value="ECO:0007669"/>
    <property type="project" value="UniProtKB-KW"/>
</dbReference>
<dbReference type="GO" id="GO:0005840">
    <property type="term" value="C:ribosome"/>
    <property type="evidence" value="ECO:0007669"/>
    <property type="project" value="UniProtKB-KW"/>
</dbReference>
<dbReference type="GO" id="GO:0003735">
    <property type="term" value="F:structural constituent of ribosome"/>
    <property type="evidence" value="ECO:0007669"/>
    <property type="project" value="InterPro"/>
</dbReference>
<dbReference type="GO" id="GO:0000049">
    <property type="term" value="F:tRNA binding"/>
    <property type="evidence" value="ECO:0007669"/>
    <property type="project" value="UniProtKB-UniRule"/>
</dbReference>
<dbReference type="GO" id="GO:0006412">
    <property type="term" value="P:translation"/>
    <property type="evidence" value="ECO:0007669"/>
    <property type="project" value="UniProtKB-UniRule"/>
</dbReference>
<dbReference type="FunFam" id="3.30.70.600:FF:000001">
    <property type="entry name" value="30S ribosomal protein S10"/>
    <property type="match status" value="1"/>
</dbReference>
<dbReference type="Gene3D" id="3.30.70.600">
    <property type="entry name" value="Ribosomal protein S10 domain"/>
    <property type="match status" value="1"/>
</dbReference>
<dbReference type="HAMAP" id="MF_00508">
    <property type="entry name" value="Ribosomal_uS10"/>
    <property type="match status" value="1"/>
</dbReference>
<dbReference type="InterPro" id="IPR001848">
    <property type="entry name" value="Ribosomal_uS10"/>
</dbReference>
<dbReference type="InterPro" id="IPR018268">
    <property type="entry name" value="Ribosomal_uS10_CS"/>
</dbReference>
<dbReference type="InterPro" id="IPR027486">
    <property type="entry name" value="Ribosomal_uS10_dom"/>
</dbReference>
<dbReference type="InterPro" id="IPR036838">
    <property type="entry name" value="Ribosomal_uS10_dom_sf"/>
</dbReference>
<dbReference type="NCBIfam" id="NF001861">
    <property type="entry name" value="PRK00596.1"/>
    <property type="match status" value="1"/>
</dbReference>
<dbReference type="NCBIfam" id="TIGR01049">
    <property type="entry name" value="rpsJ_bact"/>
    <property type="match status" value="1"/>
</dbReference>
<dbReference type="PANTHER" id="PTHR11700">
    <property type="entry name" value="30S RIBOSOMAL PROTEIN S10 FAMILY MEMBER"/>
    <property type="match status" value="1"/>
</dbReference>
<dbReference type="Pfam" id="PF00338">
    <property type="entry name" value="Ribosomal_S10"/>
    <property type="match status" value="1"/>
</dbReference>
<dbReference type="PRINTS" id="PR00971">
    <property type="entry name" value="RIBOSOMALS10"/>
</dbReference>
<dbReference type="SMART" id="SM01403">
    <property type="entry name" value="Ribosomal_S10"/>
    <property type="match status" value="1"/>
</dbReference>
<dbReference type="SUPFAM" id="SSF54999">
    <property type="entry name" value="Ribosomal protein S10"/>
    <property type="match status" value="1"/>
</dbReference>
<dbReference type="PROSITE" id="PS00361">
    <property type="entry name" value="RIBOSOMAL_S10"/>
    <property type="match status" value="1"/>
</dbReference>
<accession>Q8DI41</accession>
<feature type="chain" id="PRO_0000146615" description="Small ribosomal subunit protein uS10">
    <location>
        <begin position="1"/>
        <end position="104"/>
    </location>
</feature>